<accession>Q6G2X2</accession>
<sequence>MLQPKRTRFRKQFKGRIHGVSKGGTDLNFGAYGLKAVEPERITARQIEAARRAITRYMKRSGRVWIRIFPDLPVTSKPTEVRMGKGKGSVDYWAARVAPGRIMFELDGIPEDVAREALRLGAAKLPIKTRFIQRIAE</sequence>
<dbReference type="EMBL" id="BX897699">
    <property type="protein sequence ID" value="CAF27835.1"/>
    <property type="molecule type" value="Genomic_DNA"/>
</dbReference>
<dbReference type="RefSeq" id="WP_011180907.1">
    <property type="nucleotide sequence ID" value="NZ_LRIJ02000001.1"/>
</dbReference>
<dbReference type="SMR" id="Q6G2X2"/>
<dbReference type="PaxDb" id="283166-BH10440"/>
<dbReference type="EnsemblBacteria" id="CAF27835">
    <property type="protein sequence ID" value="CAF27835"/>
    <property type="gene ID" value="BH10440"/>
</dbReference>
<dbReference type="GeneID" id="92985270"/>
<dbReference type="KEGG" id="bhe:BH10440"/>
<dbReference type="eggNOG" id="COG0197">
    <property type="taxonomic scope" value="Bacteria"/>
</dbReference>
<dbReference type="OrthoDB" id="9802589at2"/>
<dbReference type="Proteomes" id="UP000000421">
    <property type="component" value="Chromosome"/>
</dbReference>
<dbReference type="GO" id="GO:0022625">
    <property type="term" value="C:cytosolic large ribosomal subunit"/>
    <property type="evidence" value="ECO:0007669"/>
    <property type="project" value="TreeGrafter"/>
</dbReference>
<dbReference type="GO" id="GO:0019843">
    <property type="term" value="F:rRNA binding"/>
    <property type="evidence" value="ECO:0007669"/>
    <property type="project" value="UniProtKB-UniRule"/>
</dbReference>
<dbReference type="GO" id="GO:0003735">
    <property type="term" value="F:structural constituent of ribosome"/>
    <property type="evidence" value="ECO:0007669"/>
    <property type="project" value="InterPro"/>
</dbReference>
<dbReference type="GO" id="GO:0000049">
    <property type="term" value="F:tRNA binding"/>
    <property type="evidence" value="ECO:0007669"/>
    <property type="project" value="UniProtKB-KW"/>
</dbReference>
<dbReference type="GO" id="GO:0006412">
    <property type="term" value="P:translation"/>
    <property type="evidence" value="ECO:0007669"/>
    <property type="project" value="UniProtKB-UniRule"/>
</dbReference>
<dbReference type="CDD" id="cd01433">
    <property type="entry name" value="Ribosomal_L16_L10e"/>
    <property type="match status" value="1"/>
</dbReference>
<dbReference type="FunFam" id="3.90.1170.10:FF:000001">
    <property type="entry name" value="50S ribosomal protein L16"/>
    <property type="match status" value="1"/>
</dbReference>
<dbReference type="Gene3D" id="3.90.1170.10">
    <property type="entry name" value="Ribosomal protein L10e/L16"/>
    <property type="match status" value="1"/>
</dbReference>
<dbReference type="HAMAP" id="MF_01342">
    <property type="entry name" value="Ribosomal_uL16"/>
    <property type="match status" value="1"/>
</dbReference>
<dbReference type="InterPro" id="IPR047873">
    <property type="entry name" value="Ribosomal_uL16"/>
</dbReference>
<dbReference type="InterPro" id="IPR000114">
    <property type="entry name" value="Ribosomal_uL16_bact-type"/>
</dbReference>
<dbReference type="InterPro" id="IPR020798">
    <property type="entry name" value="Ribosomal_uL16_CS"/>
</dbReference>
<dbReference type="InterPro" id="IPR016180">
    <property type="entry name" value="Ribosomal_uL16_dom"/>
</dbReference>
<dbReference type="InterPro" id="IPR036920">
    <property type="entry name" value="Ribosomal_uL16_sf"/>
</dbReference>
<dbReference type="NCBIfam" id="TIGR01164">
    <property type="entry name" value="rplP_bact"/>
    <property type="match status" value="1"/>
</dbReference>
<dbReference type="PANTHER" id="PTHR12220">
    <property type="entry name" value="50S/60S RIBOSOMAL PROTEIN L16"/>
    <property type="match status" value="1"/>
</dbReference>
<dbReference type="PANTHER" id="PTHR12220:SF13">
    <property type="entry name" value="LARGE RIBOSOMAL SUBUNIT PROTEIN UL16M"/>
    <property type="match status" value="1"/>
</dbReference>
<dbReference type="Pfam" id="PF00252">
    <property type="entry name" value="Ribosomal_L16"/>
    <property type="match status" value="1"/>
</dbReference>
<dbReference type="PRINTS" id="PR00060">
    <property type="entry name" value="RIBOSOMALL16"/>
</dbReference>
<dbReference type="SUPFAM" id="SSF54686">
    <property type="entry name" value="Ribosomal protein L16p/L10e"/>
    <property type="match status" value="1"/>
</dbReference>
<dbReference type="PROSITE" id="PS00586">
    <property type="entry name" value="RIBOSOMAL_L16_1"/>
    <property type="match status" value="1"/>
</dbReference>
<dbReference type="PROSITE" id="PS00701">
    <property type="entry name" value="RIBOSOMAL_L16_2"/>
    <property type="match status" value="1"/>
</dbReference>
<organism>
    <name type="scientific">Bartonella henselae (strain ATCC 49882 / DSM 28221 / CCUG 30454 / Houston 1)</name>
    <name type="common">Rochalimaea henselae</name>
    <dbReference type="NCBI Taxonomy" id="283166"/>
    <lineage>
        <taxon>Bacteria</taxon>
        <taxon>Pseudomonadati</taxon>
        <taxon>Pseudomonadota</taxon>
        <taxon>Alphaproteobacteria</taxon>
        <taxon>Hyphomicrobiales</taxon>
        <taxon>Bartonellaceae</taxon>
        <taxon>Bartonella</taxon>
    </lineage>
</organism>
<evidence type="ECO:0000255" key="1">
    <source>
        <dbReference type="HAMAP-Rule" id="MF_01342"/>
    </source>
</evidence>
<evidence type="ECO:0000305" key="2"/>
<gene>
    <name evidence="1" type="primary">rplP</name>
    <name type="ordered locus">BH10440</name>
</gene>
<keyword id="KW-0687">Ribonucleoprotein</keyword>
<keyword id="KW-0689">Ribosomal protein</keyword>
<keyword id="KW-0694">RNA-binding</keyword>
<keyword id="KW-0699">rRNA-binding</keyword>
<keyword id="KW-0820">tRNA-binding</keyword>
<name>RL16_BARHE</name>
<comment type="function">
    <text evidence="1">Binds 23S rRNA and is also seen to make contacts with the A and possibly P site tRNAs.</text>
</comment>
<comment type="subunit">
    <text evidence="1">Part of the 50S ribosomal subunit.</text>
</comment>
<comment type="similarity">
    <text evidence="1">Belongs to the universal ribosomal protein uL16 family.</text>
</comment>
<protein>
    <recommendedName>
        <fullName evidence="1">Large ribosomal subunit protein uL16</fullName>
    </recommendedName>
    <alternativeName>
        <fullName evidence="2">50S ribosomal protein L16</fullName>
    </alternativeName>
</protein>
<proteinExistence type="inferred from homology"/>
<reference key="1">
    <citation type="journal article" date="2004" name="Proc. Natl. Acad. Sci. U.S.A.">
        <title>The louse-borne human pathogen Bartonella quintana is a genomic derivative of the zoonotic agent Bartonella henselae.</title>
        <authorList>
            <person name="Alsmark U.C.M."/>
            <person name="Frank A.C."/>
            <person name="Karlberg E.O."/>
            <person name="Legault B.-A."/>
            <person name="Ardell D.H."/>
            <person name="Canbaeck B."/>
            <person name="Eriksson A.-S."/>
            <person name="Naeslund A.K."/>
            <person name="Handley S.A."/>
            <person name="Huvet M."/>
            <person name="La Scola B."/>
            <person name="Holmberg M."/>
            <person name="Andersson S.G.E."/>
        </authorList>
    </citation>
    <scope>NUCLEOTIDE SEQUENCE [LARGE SCALE GENOMIC DNA]</scope>
    <source>
        <strain>ATCC 49882 / DSM 28221 / CCUG 30454 / Houston 1</strain>
    </source>
</reference>
<feature type="chain" id="PRO_0000062048" description="Large ribosomal subunit protein uL16">
    <location>
        <begin position="1"/>
        <end position="137"/>
    </location>
</feature>